<organism>
    <name type="scientific">Marchantia polymorpha</name>
    <name type="common">Common liverwort</name>
    <name type="synonym">Marchantia aquatica</name>
    <dbReference type="NCBI Taxonomy" id="3197"/>
    <lineage>
        <taxon>Eukaryota</taxon>
        <taxon>Viridiplantae</taxon>
        <taxon>Streptophyta</taxon>
        <taxon>Embryophyta</taxon>
        <taxon>Marchantiophyta</taxon>
        <taxon>Marchantiopsida</taxon>
        <taxon>Marchantiidae</taxon>
        <taxon>Marchantiales</taxon>
        <taxon>Marchantiaceae</taxon>
        <taxon>Marchantia</taxon>
    </lineage>
</organism>
<comment type="function">
    <text evidence="1">NDH shuttles electrons from NAD(P)H:plastoquinone, via FMN and iron-sulfur (Fe-S) centers, to quinones in the photosynthetic chain and possibly in a chloroplast respiratory chain. The immediate electron acceptor for the enzyme in this species is believed to be plastoquinone. Couples the redox reaction to proton translocation, and thus conserves the redox energy in a proton gradient (By similarity).</text>
</comment>
<comment type="catalytic activity">
    <reaction>
        <text>a plastoquinone + NADH + (n+1) H(+)(in) = a plastoquinol + NAD(+) + n H(+)(out)</text>
        <dbReference type="Rhea" id="RHEA:42608"/>
        <dbReference type="Rhea" id="RHEA-COMP:9561"/>
        <dbReference type="Rhea" id="RHEA-COMP:9562"/>
        <dbReference type="ChEBI" id="CHEBI:15378"/>
        <dbReference type="ChEBI" id="CHEBI:17757"/>
        <dbReference type="ChEBI" id="CHEBI:57540"/>
        <dbReference type="ChEBI" id="CHEBI:57945"/>
        <dbReference type="ChEBI" id="CHEBI:62192"/>
    </reaction>
</comment>
<comment type="catalytic activity">
    <reaction>
        <text>a plastoquinone + NADPH + (n+1) H(+)(in) = a plastoquinol + NADP(+) + n H(+)(out)</text>
        <dbReference type="Rhea" id="RHEA:42612"/>
        <dbReference type="Rhea" id="RHEA-COMP:9561"/>
        <dbReference type="Rhea" id="RHEA-COMP:9562"/>
        <dbReference type="ChEBI" id="CHEBI:15378"/>
        <dbReference type="ChEBI" id="CHEBI:17757"/>
        <dbReference type="ChEBI" id="CHEBI:57783"/>
        <dbReference type="ChEBI" id="CHEBI:58349"/>
        <dbReference type="ChEBI" id="CHEBI:62192"/>
    </reaction>
</comment>
<comment type="subunit">
    <text evidence="1">NDH is composed of at least 16 different subunits, 5 of which are encoded in the nucleus.</text>
</comment>
<comment type="subcellular location">
    <subcellularLocation>
        <location evidence="1">Plastid</location>
        <location evidence="1">Chloroplast thylakoid membrane</location>
        <topology evidence="1">Multi-pass membrane protein</topology>
    </subcellularLocation>
</comment>
<comment type="similarity">
    <text evidence="3">Belongs to the complex I subunit 6 family.</text>
</comment>
<dbReference type="EC" id="7.1.1.-"/>
<dbReference type="EMBL" id="X04465">
    <property type="protein sequence ID" value="CAA28137.1"/>
    <property type="molecule type" value="Genomic_DNA"/>
</dbReference>
<dbReference type="PIR" id="A00460">
    <property type="entry name" value="DELVN6"/>
</dbReference>
<dbReference type="RefSeq" id="NP_039351.1">
    <property type="nucleotide sequence ID" value="NC_001319.1"/>
</dbReference>
<dbReference type="SMR" id="P06266"/>
<dbReference type="GeneID" id="2702615"/>
<dbReference type="GO" id="GO:0009535">
    <property type="term" value="C:chloroplast thylakoid membrane"/>
    <property type="evidence" value="ECO:0007669"/>
    <property type="project" value="UniProtKB-SubCell"/>
</dbReference>
<dbReference type="GO" id="GO:0008137">
    <property type="term" value="F:NADH dehydrogenase (ubiquinone) activity"/>
    <property type="evidence" value="ECO:0007669"/>
    <property type="project" value="InterPro"/>
</dbReference>
<dbReference type="GO" id="GO:0048038">
    <property type="term" value="F:quinone binding"/>
    <property type="evidence" value="ECO:0007669"/>
    <property type="project" value="UniProtKB-KW"/>
</dbReference>
<dbReference type="FunFam" id="1.20.120.1200:FF:000002">
    <property type="entry name" value="NAD(P)H-quinone oxidoreductase subunit 6, chloroplastic"/>
    <property type="match status" value="1"/>
</dbReference>
<dbReference type="Gene3D" id="1.20.120.1200">
    <property type="entry name" value="NADH-ubiquinone/plastoquinone oxidoreductase chain 6, subunit NuoJ"/>
    <property type="match status" value="1"/>
</dbReference>
<dbReference type="InterPro" id="IPR050290">
    <property type="entry name" value="NAD(P)H-Q_Oxidoreduct_6"/>
</dbReference>
<dbReference type="InterPro" id="IPR001457">
    <property type="entry name" value="NADH_UbQ/plastoQ_OxRdtase_su6"/>
</dbReference>
<dbReference type="InterPro" id="IPR042106">
    <property type="entry name" value="Nuo/plastoQ_OxRdtase_6_NuoJ"/>
</dbReference>
<dbReference type="NCBIfam" id="NF005163">
    <property type="entry name" value="PRK06638.1-3"/>
    <property type="match status" value="1"/>
</dbReference>
<dbReference type="PANTHER" id="PTHR48479">
    <property type="entry name" value="NAD(P)H-QUINONE OXIDOREDUCTASE SUBUNIT 6, CHLOROPLASTIC"/>
    <property type="match status" value="1"/>
</dbReference>
<dbReference type="PANTHER" id="PTHR48479:SF1">
    <property type="entry name" value="NAD(P)H-QUINONE OXIDOREDUCTASE SUBUNIT 6, CHLOROPLASTIC"/>
    <property type="match status" value="1"/>
</dbReference>
<dbReference type="Pfam" id="PF00499">
    <property type="entry name" value="Oxidored_q3"/>
    <property type="match status" value="1"/>
</dbReference>
<name>NU6C_MARPO</name>
<keyword id="KW-0150">Chloroplast</keyword>
<keyword id="KW-0472">Membrane</keyword>
<keyword id="KW-0520">NAD</keyword>
<keyword id="KW-0521">NADP</keyword>
<keyword id="KW-0934">Plastid</keyword>
<keyword id="KW-0618">Plastoquinone</keyword>
<keyword id="KW-0874">Quinone</keyword>
<keyword id="KW-0793">Thylakoid</keyword>
<keyword id="KW-1278">Translocase</keyword>
<keyword id="KW-0812">Transmembrane</keyword>
<keyword id="KW-1133">Transmembrane helix</keyword>
<keyword id="KW-0813">Transport</keyword>
<reference key="1">
    <citation type="journal article" date="1986" name="Nature">
        <title>Chloroplast gene organization deduced from complete sequence of liverwort Marchantia polymorpha chloroplast DNA.</title>
        <authorList>
            <person name="Ohyama K."/>
            <person name="Fukuzawa H."/>
            <person name="Kohchi T."/>
            <person name="Shirai H."/>
            <person name="Sano T."/>
            <person name="Sano S."/>
            <person name="Umesono K."/>
            <person name="Shiki Y."/>
            <person name="Takeuchi M."/>
            <person name="Chang Z."/>
            <person name="Aota S."/>
            <person name="Inokuchi H."/>
            <person name="Ozeki H."/>
        </authorList>
    </citation>
    <scope>NUCLEOTIDE SEQUENCE [LARGE SCALE GENOMIC DNA]</scope>
</reference>
<reference key="2">
    <citation type="journal article" date="1988" name="J. Mol. Biol.">
        <title>Structure and organization of Marchantia polymorpha chloroplast genome. IV. Inverted repeat and small single copy regions.</title>
        <authorList>
            <person name="Kohchi T."/>
            <person name="Shirai H."/>
            <person name="Fukuzawa H."/>
            <person name="Sano T."/>
            <person name="Komano T."/>
            <person name="Umesono K."/>
            <person name="Inokuchi H."/>
            <person name="Ozeki H."/>
            <person name="Ohyama K."/>
        </authorList>
    </citation>
    <scope>NUCLEOTIDE SEQUENCE [GENOMIC DNA]</scope>
</reference>
<proteinExistence type="inferred from homology"/>
<gene>
    <name type="primary">ndhG</name>
    <name type="synonym">ndh6</name>
</gene>
<protein>
    <recommendedName>
        <fullName>NAD(P)H-quinone oxidoreductase subunit 6, chloroplastic</fullName>
        <ecNumber>7.1.1.-</ecNumber>
    </recommendedName>
    <alternativeName>
        <fullName>NAD(P)H dehydrogenase subunit 6</fullName>
    </alternativeName>
    <alternativeName>
        <fullName>NADH-plastoquinone oxidoreductase subunit 6</fullName>
    </alternativeName>
</protein>
<accession>P06266</accession>
<feature type="chain" id="PRO_0000118356" description="NAD(P)H-quinone oxidoreductase subunit 6, chloroplastic">
    <location>
        <begin position="1"/>
        <end position="191"/>
    </location>
</feature>
<feature type="transmembrane region" description="Helical" evidence="2">
    <location>
        <begin position="10"/>
        <end position="30"/>
    </location>
</feature>
<feature type="transmembrane region" description="Helical" evidence="2">
    <location>
        <begin position="32"/>
        <end position="52"/>
    </location>
</feature>
<feature type="transmembrane region" description="Helical" evidence="2">
    <location>
        <begin position="61"/>
        <end position="81"/>
    </location>
</feature>
<feature type="transmembrane region" description="Helical" evidence="2">
    <location>
        <begin position="89"/>
        <end position="109"/>
    </location>
</feature>
<feature type="transmembrane region" description="Helical" evidence="2">
    <location>
        <begin position="153"/>
        <end position="173"/>
    </location>
</feature>
<geneLocation type="chloroplast"/>
<evidence type="ECO:0000250" key="1"/>
<evidence type="ECO:0000255" key="2"/>
<evidence type="ECO:0000305" key="3"/>
<sequence length="191" mass="21607">MKLPESFYETIFLFLESGLILGSLGVILLTNIVYSALFLGFVFVCISLLYLLLNADFVAAAQILIYVGAVNVLIIFAVMLINKKQYSNFFVYWTIGDGITLTLCTSIFLLLNNFISNTSWSKIFLMTKPNLVVKDIILINTVRHIGSELLTEFLLPFELMSIILLVALIGAITLARREKKIELEKNDFFNF</sequence>